<dbReference type="EC" id="7.1.1.-" evidence="1"/>
<dbReference type="EMBL" id="EU117376">
    <property type="protein sequence ID" value="ABV66158.1"/>
    <property type="molecule type" value="Genomic_DNA"/>
</dbReference>
<dbReference type="RefSeq" id="YP_001718441.1">
    <property type="nucleotide sequence ID" value="NC_010433.1"/>
</dbReference>
<dbReference type="SMR" id="B1NWF4"/>
<dbReference type="GeneID" id="6000072"/>
<dbReference type="KEGG" id="mesc:6000072"/>
<dbReference type="OrthoDB" id="1889813at2759"/>
<dbReference type="GO" id="GO:0009535">
    <property type="term" value="C:chloroplast thylakoid membrane"/>
    <property type="evidence" value="ECO:0007669"/>
    <property type="project" value="UniProtKB-SubCell"/>
</dbReference>
<dbReference type="GO" id="GO:0051539">
    <property type="term" value="F:4 iron, 4 sulfur cluster binding"/>
    <property type="evidence" value="ECO:0007669"/>
    <property type="project" value="UniProtKB-KW"/>
</dbReference>
<dbReference type="GO" id="GO:0005506">
    <property type="term" value="F:iron ion binding"/>
    <property type="evidence" value="ECO:0007669"/>
    <property type="project" value="UniProtKB-UniRule"/>
</dbReference>
<dbReference type="GO" id="GO:0008137">
    <property type="term" value="F:NADH dehydrogenase (ubiquinone) activity"/>
    <property type="evidence" value="ECO:0007669"/>
    <property type="project" value="InterPro"/>
</dbReference>
<dbReference type="GO" id="GO:0048038">
    <property type="term" value="F:quinone binding"/>
    <property type="evidence" value="ECO:0007669"/>
    <property type="project" value="UniProtKB-KW"/>
</dbReference>
<dbReference type="GO" id="GO:0019684">
    <property type="term" value="P:photosynthesis, light reaction"/>
    <property type="evidence" value="ECO:0007669"/>
    <property type="project" value="UniProtKB-UniRule"/>
</dbReference>
<dbReference type="FunFam" id="3.40.50.12280:FF:000003">
    <property type="entry name" value="NAD(P)H-quinone oxidoreductase subunit K, chloroplastic"/>
    <property type="match status" value="1"/>
</dbReference>
<dbReference type="Gene3D" id="3.40.50.12280">
    <property type="match status" value="1"/>
</dbReference>
<dbReference type="HAMAP" id="MF_01356">
    <property type="entry name" value="NDH1_NuoB"/>
    <property type="match status" value="1"/>
</dbReference>
<dbReference type="InterPro" id="IPR006137">
    <property type="entry name" value="NADH_UbQ_OxRdtase-like_20kDa"/>
</dbReference>
<dbReference type="InterPro" id="IPR006138">
    <property type="entry name" value="NADH_UQ_OxRdtase_20Kd_su"/>
</dbReference>
<dbReference type="NCBIfam" id="TIGR01957">
    <property type="entry name" value="nuoB_fam"/>
    <property type="match status" value="1"/>
</dbReference>
<dbReference type="NCBIfam" id="NF005012">
    <property type="entry name" value="PRK06411.1"/>
    <property type="match status" value="1"/>
</dbReference>
<dbReference type="PANTHER" id="PTHR11995">
    <property type="entry name" value="NADH DEHYDROGENASE"/>
    <property type="match status" value="1"/>
</dbReference>
<dbReference type="PANTHER" id="PTHR11995:SF14">
    <property type="entry name" value="NADH DEHYDROGENASE [UBIQUINONE] IRON-SULFUR PROTEIN 7, MITOCHONDRIAL"/>
    <property type="match status" value="1"/>
</dbReference>
<dbReference type="Pfam" id="PF01058">
    <property type="entry name" value="Oxidored_q6"/>
    <property type="match status" value="1"/>
</dbReference>
<dbReference type="SUPFAM" id="SSF56770">
    <property type="entry name" value="HydA/Nqo6-like"/>
    <property type="match status" value="1"/>
</dbReference>
<dbReference type="PROSITE" id="PS01150">
    <property type="entry name" value="COMPLEX1_20K"/>
    <property type="match status" value="1"/>
</dbReference>
<proteinExistence type="inferred from homology"/>
<sequence>MNSIEFPLLDRTTQISVISTTSNDLSNWSRLSSLWPLLYGTSCCFIEFASLIGSRFDFDRYGLVPRSSPRQADLILTAGTVTMKMAPSLVRLYEQMPEPKYVIAMGACTITGGMFSTDSYSTVRGVDKLIPVDVYLPGCPPKPEAVIDAITKLRKKISREIYEDRIRSQPGKRCFTTNHKFNIERTTHTGNYDQELLYQSPSTSKIPPETFFKYKRSVSSNELVN</sequence>
<feature type="chain" id="PRO_0000358559" description="NAD(P)H-quinone oxidoreductase subunit K, chloroplastic">
    <location>
        <begin position="1"/>
        <end position="225"/>
    </location>
</feature>
<feature type="binding site" evidence="1">
    <location>
        <position position="43"/>
    </location>
    <ligand>
        <name>[4Fe-4S] cluster</name>
        <dbReference type="ChEBI" id="CHEBI:49883"/>
    </ligand>
</feature>
<feature type="binding site" evidence="1">
    <location>
        <position position="44"/>
    </location>
    <ligand>
        <name>[4Fe-4S] cluster</name>
        <dbReference type="ChEBI" id="CHEBI:49883"/>
    </ligand>
</feature>
<feature type="binding site" evidence="1">
    <location>
        <position position="108"/>
    </location>
    <ligand>
        <name>[4Fe-4S] cluster</name>
        <dbReference type="ChEBI" id="CHEBI:49883"/>
    </ligand>
</feature>
<feature type="binding site" evidence="1">
    <location>
        <position position="139"/>
    </location>
    <ligand>
        <name>[4Fe-4S] cluster</name>
        <dbReference type="ChEBI" id="CHEBI:49883"/>
    </ligand>
</feature>
<geneLocation type="chloroplast"/>
<comment type="function">
    <text evidence="1">NDH shuttles electrons from NAD(P)H:plastoquinone, via FMN and iron-sulfur (Fe-S) centers, to quinones in the photosynthetic chain and possibly in a chloroplast respiratory chain. The immediate electron acceptor for the enzyme in this species is believed to be plastoquinone. Couples the redox reaction to proton translocation, and thus conserves the redox energy in a proton gradient.</text>
</comment>
<comment type="catalytic activity">
    <reaction evidence="1">
        <text>a plastoquinone + NADH + (n+1) H(+)(in) = a plastoquinol + NAD(+) + n H(+)(out)</text>
        <dbReference type="Rhea" id="RHEA:42608"/>
        <dbReference type="Rhea" id="RHEA-COMP:9561"/>
        <dbReference type="Rhea" id="RHEA-COMP:9562"/>
        <dbReference type="ChEBI" id="CHEBI:15378"/>
        <dbReference type="ChEBI" id="CHEBI:17757"/>
        <dbReference type="ChEBI" id="CHEBI:57540"/>
        <dbReference type="ChEBI" id="CHEBI:57945"/>
        <dbReference type="ChEBI" id="CHEBI:62192"/>
    </reaction>
</comment>
<comment type="catalytic activity">
    <reaction evidence="1">
        <text>a plastoquinone + NADPH + (n+1) H(+)(in) = a plastoquinol + NADP(+) + n H(+)(out)</text>
        <dbReference type="Rhea" id="RHEA:42612"/>
        <dbReference type="Rhea" id="RHEA-COMP:9561"/>
        <dbReference type="Rhea" id="RHEA-COMP:9562"/>
        <dbReference type="ChEBI" id="CHEBI:15378"/>
        <dbReference type="ChEBI" id="CHEBI:17757"/>
        <dbReference type="ChEBI" id="CHEBI:57783"/>
        <dbReference type="ChEBI" id="CHEBI:58349"/>
        <dbReference type="ChEBI" id="CHEBI:62192"/>
    </reaction>
</comment>
<comment type="cofactor">
    <cofactor evidence="1">
        <name>[4Fe-4S] cluster</name>
        <dbReference type="ChEBI" id="CHEBI:49883"/>
    </cofactor>
    <text evidence="1">Binds 1 [4Fe-4S] cluster.</text>
</comment>
<comment type="subunit">
    <text evidence="1">NDH is composed of at least 16 different subunits, 5 of which are encoded in the nucleus.</text>
</comment>
<comment type="subcellular location">
    <subcellularLocation>
        <location evidence="1">Plastid</location>
        <location evidence="1">Chloroplast thylakoid membrane</location>
        <topology evidence="1">Peripheral membrane protein</topology>
        <orientation evidence="1">Stromal side</orientation>
    </subcellularLocation>
</comment>
<comment type="similarity">
    <text evidence="1">Belongs to the complex I 20 kDa subunit family.</text>
</comment>
<gene>
    <name evidence="1" type="primary">ndhK</name>
</gene>
<organism>
    <name type="scientific">Manihot esculenta</name>
    <name type="common">Cassava</name>
    <name type="synonym">Jatropha manihot</name>
    <dbReference type="NCBI Taxonomy" id="3983"/>
    <lineage>
        <taxon>Eukaryota</taxon>
        <taxon>Viridiplantae</taxon>
        <taxon>Streptophyta</taxon>
        <taxon>Embryophyta</taxon>
        <taxon>Tracheophyta</taxon>
        <taxon>Spermatophyta</taxon>
        <taxon>Magnoliopsida</taxon>
        <taxon>eudicotyledons</taxon>
        <taxon>Gunneridae</taxon>
        <taxon>Pentapetalae</taxon>
        <taxon>rosids</taxon>
        <taxon>fabids</taxon>
        <taxon>Malpighiales</taxon>
        <taxon>Euphorbiaceae</taxon>
        <taxon>Crotonoideae</taxon>
        <taxon>Manihoteae</taxon>
        <taxon>Manihot</taxon>
    </lineage>
</organism>
<accession>B1NWF4</accession>
<reference key="1">
    <citation type="journal article" date="2008" name="Theor. Appl. Genet.">
        <title>The complete nucleotide sequence of the cassava (Manihot esculenta) chloroplast genome and the evolution of atpF in Malpighiales: RNA editing and multiple losses of a group II intron.</title>
        <authorList>
            <person name="Daniell H."/>
            <person name="Wurdack K.J."/>
            <person name="Kanagaraj A."/>
            <person name="Lee S.-B."/>
            <person name="Saski C."/>
            <person name="Jansen R.K."/>
        </authorList>
    </citation>
    <scope>NUCLEOTIDE SEQUENCE [LARGE SCALE GENOMIC DNA]</scope>
    <source>
        <strain>cv. TME3</strain>
    </source>
</reference>
<keyword id="KW-0004">4Fe-4S</keyword>
<keyword id="KW-0150">Chloroplast</keyword>
<keyword id="KW-0408">Iron</keyword>
<keyword id="KW-0411">Iron-sulfur</keyword>
<keyword id="KW-0472">Membrane</keyword>
<keyword id="KW-0479">Metal-binding</keyword>
<keyword id="KW-0520">NAD</keyword>
<keyword id="KW-0521">NADP</keyword>
<keyword id="KW-0934">Plastid</keyword>
<keyword id="KW-0618">Plastoquinone</keyword>
<keyword id="KW-0874">Quinone</keyword>
<keyword id="KW-0793">Thylakoid</keyword>
<keyword id="KW-1278">Translocase</keyword>
<keyword id="KW-0813">Transport</keyword>
<name>NDHK_MANES</name>
<protein>
    <recommendedName>
        <fullName evidence="1">NAD(P)H-quinone oxidoreductase subunit K, chloroplastic</fullName>
        <ecNumber evidence="1">7.1.1.-</ecNumber>
    </recommendedName>
    <alternativeName>
        <fullName evidence="1">NAD(P)H dehydrogenase subunit K</fullName>
    </alternativeName>
    <alternativeName>
        <fullName evidence="1">NADH-plastoquinone oxidoreductase subunit K</fullName>
    </alternativeName>
</protein>
<evidence type="ECO:0000255" key="1">
    <source>
        <dbReference type="HAMAP-Rule" id="MF_01356"/>
    </source>
</evidence>